<keyword id="KW-1064">Adaptive immunity</keyword>
<keyword id="KW-1003">Cell membrane</keyword>
<keyword id="KW-0391">Immunity</keyword>
<keyword id="KW-0472">Membrane</keyword>
<keyword id="KW-0675">Receptor</keyword>
<keyword id="KW-1185">Reference proteome</keyword>
<keyword id="KW-1279">T cell receptor</keyword>
<proteinExistence type="predicted"/>
<accession>A0A0J9YXG5</accession>
<organism>
    <name type="scientific">Homo sapiens</name>
    <name type="common">Human</name>
    <dbReference type="NCBI Taxonomy" id="9606"/>
    <lineage>
        <taxon>Eukaryota</taxon>
        <taxon>Metazoa</taxon>
        <taxon>Chordata</taxon>
        <taxon>Craniata</taxon>
        <taxon>Vertebrata</taxon>
        <taxon>Euteleostomi</taxon>
        <taxon>Mammalia</taxon>
        <taxon>Eutheria</taxon>
        <taxon>Euarchontoglires</taxon>
        <taxon>Primates</taxon>
        <taxon>Haplorrhini</taxon>
        <taxon>Catarrhini</taxon>
        <taxon>Hominidae</taxon>
        <taxon>Homo</taxon>
    </lineage>
</organism>
<protein>
    <recommendedName>
        <fullName evidence="6">T cell receptor beta joining 1-4</fullName>
    </recommendedName>
</protein>
<reference key="1">
    <citation type="journal article" date="2003" name="Nature">
        <title>The DNA sequence of human chromosome 7.</title>
        <authorList>
            <person name="Hillier L.W."/>
            <person name="Fulton R.S."/>
            <person name="Fulton L.A."/>
            <person name="Graves T.A."/>
            <person name="Pepin K.H."/>
            <person name="Wagner-McPherson C."/>
            <person name="Layman D."/>
            <person name="Maas J."/>
            <person name="Jaeger S."/>
            <person name="Walker R."/>
            <person name="Wylie K."/>
            <person name="Sekhon M."/>
            <person name="Becker M.C."/>
            <person name="O'Laughlin M.D."/>
            <person name="Schaller M.E."/>
            <person name="Fewell G.A."/>
            <person name="Delehaunty K.D."/>
            <person name="Miner T.L."/>
            <person name="Nash W.E."/>
            <person name="Cordes M."/>
            <person name="Du H."/>
            <person name="Sun H."/>
            <person name="Edwards J."/>
            <person name="Bradshaw-Cordum H."/>
            <person name="Ali J."/>
            <person name="Andrews S."/>
            <person name="Isak A."/>
            <person name="Vanbrunt A."/>
            <person name="Nguyen C."/>
            <person name="Du F."/>
            <person name="Lamar B."/>
            <person name="Courtney L."/>
            <person name="Kalicki J."/>
            <person name="Ozersky P."/>
            <person name="Bielicki L."/>
            <person name="Scott K."/>
            <person name="Holmes A."/>
            <person name="Harkins R."/>
            <person name="Harris A."/>
            <person name="Strong C.M."/>
            <person name="Hou S."/>
            <person name="Tomlinson C."/>
            <person name="Dauphin-Kohlberg S."/>
            <person name="Kozlowicz-Reilly A."/>
            <person name="Leonard S."/>
            <person name="Rohlfing T."/>
            <person name="Rock S.M."/>
            <person name="Tin-Wollam A.-M."/>
            <person name="Abbott A."/>
            <person name="Minx P."/>
            <person name="Maupin R."/>
            <person name="Strowmatt C."/>
            <person name="Latreille P."/>
            <person name="Miller N."/>
            <person name="Johnson D."/>
            <person name="Murray J."/>
            <person name="Woessner J.P."/>
            <person name="Wendl M.C."/>
            <person name="Yang S.-P."/>
            <person name="Schultz B.R."/>
            <person name="Wallis J.W."/>
            <person name="Spieth J."/>
            <person name="Bieri T.A."/>
            <person name="Nelson J.O."/>
            <person name="Berkowicz N."/>
            <person name="Wohldmann P.E."/>
            <person name="Cook L.L."/>
            <person name="Hickenbotham M.T."/>
            <person name="Eldred J."/>
            <person name="Williams D."/>
            <person name="Bedell J.A."/>
            <person name="Mardis E.R."/>
            <person name="Clifton S.W."/>
            <person name="Chissoe S.L."/>
            <person name="Marra M.A."/>
            <person name="Raymond C."/>
            <person name="Haugen E."/>
            <person name="Gillett W."/>
            <person name="Zhou Y."/>
            <person name="James R."/>
            <person name="Phelps K."/>
            <person name="Iadanoto S."/>
            <person name="Bubb K."/>
            <person name="Simms E."/>
            <person name="Levy R."/>
            <person name="Clendenning J."/>
            <person name="Kaul R."/>
            <person name="Kent W.J."/>
            <person name="Furey T.S."/>
            <person name="Baertsch R.A."/>
            <person name="Brent M.R."/>
            <person name="Keibler E."/>
            <person name="Flicek P."/>
            <person name="Bork P."/>
            <person name="Suyama M."/>
            <person name="Bailey J.A."/>
            <person name="Portnoy M.E."/>
            <person name="Torrents D."/>
            <person name="Chinwalla A.T."/>
            <person name="Gish W.R."/>
            <person name="Eddy S.R."/>
            <person name="McPherson J.D."/>
            <person name="Olson M.V."/>
            <person name="Eichler E.E."/>
            <person name="Green E.D."/>
            <person name="Waterston R.H."/>
            <person name="Wilson R.K."/>
        </authorList>
    </citation>
    <scope>NUCLEOTIDE SEQUENCE [LARGE SCALE GENOMIC DNA] (IMGT ALLELE TRBJ1-4*01)</scope>
</reference>
<reference key="2">
    <citation type="book" date="2001" name="The T Cell Receptor FactsBook.">
        <title>The T Cell Receptor FactsBook.</title>
        <editorList>
            <person name="Lefranc M.P."/>
            <person name="Lefranc G."/>
        </editorList>
        <authorList>
            <person name="Lefranc M.P."/>
            <person name="Lefranc G."/>
        </authorList>
    </citation>
    <scope>NOMENCLATURE</scope>
</reference>
<reference key="3">
    <citation type="journal article" date="2004" name="Nat. Rev. Immunol.">
        <title>The many important facets of T-cell repertoire diversity.</title>
        <authorList>
            <person name="Nikolich-Zugich J."/>
            <person name="Slifka M.K."/>
            <person name="Messaoudi I."/>
        </authorList>
    </citation>
    <scope>REVIEW ON T CELL REPERTOIRE DIVERSITY</scope>
</reference>
<reference key="4">
    <citation type="journal article" date="2010" name="Cold Spring Harb. Perspect. Biol.">
        <title>Structural biology of the T-cell receptor: insights into receptor assembly, ligand recognition, and initiation of signaling.</title>
        <authorList>
            <person name="Wucherpfennig K.W."/>
            <person name="Gagnon E."/>
            <person name="Call M.J."/>
            <person name="Huseby E.S."/>
            <person name="Call M.E."/>
        </authorList>
    </citation>
    <scope>REVIEW ON T CELL RECEPTOR-CD3 COMPLEX ASSEMBLY</scope>
    <scope>SUBCELLULAR LOCATION</scope>
</reference>
<reference key="5">
    <citation type="journal article" date="2013" name="Nat. Rev. Immunol.">
        <title>T cell receptor signalling networks: branched, diversified and bounded.</title>
        <authorList>
            <person name="Brownlie R.J."/>
            <person name="Zamoyska R."/>
        </authorList>
    </citation>
    <scope>REVIEW ON T CELL RECEPTOR SIGNALING</scope>
</reference>
<reference key="6">
    <citation type="journal article" date="2014" name="Front. Immunol.">
        <title>Immunoglobulin and T Cell Receptor Genes: IMGT((R)) and the Birth and Rise of Immunoinformatics.</title>
        <authorList>
            <person name="Lefranc M.P."/>
        </authorList>
    </citation>
    <scope>NOMENCLATURE</scope>
</reference>
<reference key="7">
    <citation type="journal article" date="2015" name="Annu. Rev. Immunol.">
        <title>T cell antigen receptor recognition of antigen-presenting molecules.</title>
        <authorList>
            <person name="Rossjohn J."/>
            <person name="Gras S."/>
            <person name="Miles J.J."/>
            <person name="Turner S.J."/>
            <person name="Godfrey D.I."/>
            <person name="McCluskey J."/>
        </authorList>
    </citation>
    <scope>REVIEW ON FUNCTION</scope>
</reference>
<dbReference type="EMBL" id="AC239618">
    <property type="status" value="NOT_ANNOTATED_CDS"/>
    <property type="molecule type" value="Genomic_DNA"/>
</dbReference>
<dbReference type="EMBL" id="AC245427">
    <property type="status" value="NOT_ANNOTATED_CDS"/>
    <property type="molecule type" value="Genomic_DNA"/>
</dbReference>
<dbReference type="IMGT_GENE-DB" id="TRBJ1-4"/>
<dbReference type="BioMuta" id="ENSG00000281958"/>
<dbReference type="Ensembl" id="ENST00000632041.1">
    <property type="protein sequence ID" value="ENSP00000488394.1"/>
    <property type="gene ID" value="ENSG00000281958.1"/>
</dbReference>
<dbReference type="Ensembl" id="ENST00000633891.1">
    <property type="protein sequence ID" value="ENSP00000488040.1"/>
    <property type="gene ID" value="ENSG00000282273.1"/>
</dbReference>
<dbReference type="AGR" id="HGNC:12165"/>
<dbReference type="GeneCards" id="TRBJ1-4"/>
<dbReference type="HGNC" id="HGNC:12165">
    <property type="gene designation" value="TRBJ1-4"/>
</dbReference>
<dbReference type="HPA" id="ENSG00000281958">
    <property type="expression patterns" value="Tissue enriched (lymphoid)"/>
</dbReference>
<dbReference type="neXtProt" id="NX_A0A0J9YXG5"/>
<dbReference type="VEuPathDB" id="HostDB:ENSG00000281958"/>
<dbReference type="InParanoid" id="A0A0J9YXG5"/>
<dbReference type="PAN-GO" id="A0A0J9YXG5">
    <property type="GO annotations" value="0 GO annotations based on evolutionary models"/>
</dbReference>
<dbReference type="ChiTaRS" id="TRBJ1-4">
    <property type="organism name" value="human"/>
</dbReference>
<dbReference type="PRO" id="PR:A0A0J9YXG5"/>
<dbReference type="Proteomes" id="UP000005640">
    <property type="component" value="Chromosome 7"/>
</dbReference>
<dbReference type="Bgee" id="ENSG00000281958">
    <property type="expression patterns" value="Expressed in granulocyte and 83 other cell types or tissues"/>
</dbReference>
<dbReference type="GO" id="GO:0042101">
    <property type="term" value="C:T cell receptor complex"/>
    <property type="evidence" value="ECO:0007669"/>
    <property type="project" value="UniProtKB-KW"/>
</dbReference>
<dbReference type="GO" id="GO:0002250">
    <property type="term" value="P:adaptive immune response"/>
    <property type="evidence" value="ECO:0007669"/>
    <property type="project" value="UniProtKB-KW"/>
</dbReference>
<evidence type="ECO:0000303" key="1">
    <source>
    </source>
</evidence>
<evidence type="ECO:0000303" key="2">
    <source>
    </source>
</evidence>
<evidence type="ECO:0000303" key="3">
    <source>
    </source>
</evidence>
<evidence type="ECO:0000303" key="4">
    <source>
    </source>
</evidence>
<evidence type="ECO:0000303" key="5">
    <source>
    </source>
</evidence>
<evidence type="ECO:0000303" key="6">
    <source ref="2"/>
</evidence>
<evidence type="ECO:0000312" key="7">
    <source>
        <dbReference type="HGNC" id="HGNC:12165"/>
    </source>
</evidence>
<name>TJB14_HUMAN</name>
<gene>
    <name evidence="6 7" type="primary">TRBJ1-4</name>
</gene>
<sequence length="16" mass="1741">TNEKLFFGSGTQLSVL</sequence>
<comment type="function">
    <text evidence="1 3 4 5">J region of the variable domain of T cell receptor (TR) beta chain that participates in the antigen recognition (PubMed:24600447). Alpha-beta T cell receptors are antigen specific receptors which are essential to the immune response and are present on the cell surface of T lymphocytes. Recognize peptide-major histocompatibility (MH) (pMH) complexes that are displayed by antigen presenting cells (APC), a prerequisite for efficient T cell adaptive immunity against pathogens (PubMed:25493333). Binding of alpha-beta TR to pMH complex initiates TR-CD3 clustering on the cell surface and intracellular activation of LCK that phosphorylates the ITAM motifs of CD3G, CD3D, CD3E and CD247 enabling the recruitment of ZAP70. In turn ZAP70 phosphorylates LAT, which recruits numerous signaling molecules to form the LAT signalosome. The LAT signalosome propagates signal branching to three major signaling pathways, the calcium, the mitogen-activated protein kinase (MAPK) kinase and the nuclear factor NF-kappa-B (NF-kB) pathways, leading to the mobilization of transcription factors that are critical for gene expression and essential for T cell growth and differentiation (PubMed:23524462). The T cell repertoire is generated in the thymus, by V-(D)-J rearrangement. This repertoire is then shaped by intrathymic selection events to generate a peripheral T cell pool of self-MH restricted, non-autoaggressive T cells. Post-thymic interaction of alpha-beta TR with the pMH complexes shapes TR structural and functional avidity (PubMed:15040585).</text>
</comment>
<comment type="subunit">
    <text evidence="2">Alpha-beta TR is a heterodimer composed of an alpha and beta chain; disulfide-linked. The alpha-beta TR is associated with the transmembrane signaling CD3 coreceptor proteins to form the TR-CD3 (TcR or TCR). The assembly of alpha-beta TR heterodimers with CD3 occurs in the endoplasmic reticulum where a single alpha-beta TR heterodimer associates with one CD3D-CD3E heterodimer, one CD3G-CD3E heterodimer and one CD247 homodimer forming a stable octameric structure. CD3D-CD3E and CD3G-CD3E heterodimers preferentially associate with TR alpha and TR beta chains, respectively. The association of the CD247 homodimer is the last step of TcR assembly in the endoplasmic reticulum and is required for transport to the cell surface.</text>
</comment>
<comment type="subcellular location">
    <subcellularLocation>
        <location evidence="2">Cell membrane</location>
    </subcellularLocation>
</comment>
<feature type="chain" id="PRO_0000447251" description="T cell receptor beta joining 1-4">
    <location>
        <begin position="1" status="less than"/>
        <end position="16" status="greater than"/>
    </location>
</feature>
<feature type="non-terminal residue">
    <location>
        <position position="1"/>
    </location>
</feature>
<feature type="non-terminal residue">
    <location>
        <position position="16"/>
    </location>
</feature>